<accession>B4TBH3</accession>
<proteinExistence type="inferred from homology"/>
<sequence length="320" mass="35346">MRSAQVYRWQIPMDAGVVLRDRRLKTRDGLYVCLRDGEREGWGEISPLPGFSQETWEEAQTALLTWVNDWLQGSEGLPEMPSVAFGASCALAELTGVLPEAADYRAAPLCTGDPDDLVLRLADMPGEKIAKVKVGLYEAVRDGMVVNVLLEAIPDLHLRLDANRAWTPLKAQQFAKYVNPDYRARIAFLEEPCKTRDDSRAFARETGIAIAWDESLREADFTFEAEEGVRAVVIKPTLTGSLDKVREQVAAAHALGLTAVISSSIESSLGLTQLARIAAWLTPGTLPGLDTLHLMQAQQIRPWPGSALPCLKREELERLL</sequence>
<organism>
    <name type="scientific">Salmonella heidelberg (strain SL476)</name>
    <dbReference type="NCBI Taxonomy" id="454169"/>
    <lineage>
        <taxon>Bacteria</taxon>
        <taxon>Pseudomonadati</taxon>
        <taxon>Pseudomonadota</taxon>
        <taxon>Gammaproteobacteria</taxon>
        <taxon>Enterobacterales</taxon>
        <taxon>Enterobacteriaceae</taxon>
        <taxon>Salmonella</taxon>
    </lineage>
</organism>
<evidence type="ECO:0000255" key="1">
    <source>
        <dbReference type="HAMAP-Rule" id="MF_00470"/>
    </source>
</evidence>
<reference key="1">
    <citation type="journal article" date="2011" name="J. Bacteriol.">
        <title>Comparative genomics of 28 Salmonella enterica isolates: evidence for CRISPR-mediated adaptive sublineage evolution.</title>
        <authorList>
            <person name="Fricke W.F."/>
            <person name="Mammel M.K."/>
            <person name="McDermott P.F."/>
            <person name="Tartera C."/>
            <person name="White D.G."/>
            <person name="Leclerc J.E."/>
            <person name="Ravel J."/>
            <person name="Cebula T.A."/>
        </authorList>
    </citation>
    <scope>NUCLEOTIDE SEQUENCE [LARGE SCALE GENOMIC DNA]</scope>
    <source>
        <strain>SL476</strain>
    </source>
</reference>
<protein>
    <recommendedName>
        <fullName evidence="1">o-succinylbenzoate synthase</fullName>
        <shortName evidence="1">OSB synthase</shortName>
        <shortName evidence="1">OSBS</shortName>
        <ecNumber evidence="1">4.2.1.113</ecNumber>
    </recommendedName>
    <alternativeName>
        <fullName evidence="1">4-(2'-carboxyphenyl)-4-oxybutyric acid synthase</fullName>
    </alternativeName>
    <alternativeName>
        <fullName evidence="1">o-succinylbenzoic acid synthase</fullName>
    </alternativeName>
</protein>
<name>MENC_SALHS</name>
<gene>
    <name evidence="1" type="primary">menC</name>
    <name type="ordered locus">SeHA_C2546</name>
</gene>
<comment type="function">
    <text evidence="1">Converts 2-succinyl-6-hydroxy-2,4-cyclohexadiene-1-carboxylate (SHCHC) to 2-succinylbenzoate (OSB).</text>
</comment>
<comment type="catalytic activity">
    <reaction evidence="1">
        <text>(1R,6R)-6-hydroxy-2-succinyl-cyclohexa-2,4-diene-1-carboxylate = 2-succinylbenzoate + H2O</text>
        <dbReference type="Rhea" id="RHEA:10196"/>
        <dbReference type="ChEBI" id="CHEBI:15377"/>
        <dbReference type="ChEBI" id="CHEBI:18325"/>
        <dbReference type="ChEBI" id="CHEBI:58689"/>
        <dbReference type="EC" id="4.2.1.113"/>
    </reaction>
</comment>
<comment type="cofactor">
    <cofactor evidence="1">
        <name>a divalent metal cation</name>
        <dbReference type="ChEBI" id="CHEBI:60240"/>
    </cofactor>
</comment>
<comment type="pathway">
    <text evidence="1">Quinol/quinone metabolism; 1,4-dihydroxy-2-naphthoate biosynthesis; 1,4-dihydroxy-2-naphthoate from chorismate: step 4/7.</text>
</comment>
<comment type="pathway">
    <text evidence="1">Quinol/quinone metabolism; menaquinone biosynthesis.</text>
</comment>
<comment type="similarity">
    <text evidence="1">Belongs to the mandelate racemase/muconate lactonizing enzyme family. MenC type 1 subfamily.</text>
</comment>
<keyword id="KW-0456">Lyase</keyword>
<keyword id="KW-0460">Magnesium</keyword>
<keyword id="KW-0474">Menaquinone biosynthesis</keyword>
<keyword id="KW-0479">Metal-binding</keyword>
<dbReference type="EC" id="4.2.1.113" evidence="1"/>
<dbReference type="EMBL" id="CP001120">
    <property type="protein sequence ID" value="ACF67504.1"/>
    <property type="molecule type" value="Genomic_DNA"/>
</dbReference>
<dbReference type="RefSeq" id="WP_001255568.1">
    <property type="nucleotide sequence ID" value="NC_011083.1"/>
</dbReference>
<dbReference type="SMR" id="B4TBH3"/>
<dbReference type="KEGG" id="seh:SeHA_C2546"/>
<dbReference type="HOGENOM" id="CLU_030273_0_1_6"/>
<dbReference type="UniPathway" id="UPA00079"/>
<dbReference type="UniPathway" id="UPA01057">
    <property type="reaction ID" value="UER00165"/>
</dbReference>
<dbReference type="Proteomes" id="UP000001866">
    <property type="component" value="Chromosome"/>
</dbReference>
<dbReference type="GO" id="GO:0000287">
    <property type="term" value="F:magnesium ion binding"/>
    <property type="evidence" value="ECO:0007669"/>
    <property type="project" value="UniProtKB-UniRule"/>
</dbReference>
<dbReference type="GO" id="GO:0043748">
    <property type="term" value="F:O-succinylbenzoate synthase activity"/>
    <property type="evidence" value="ECO:0007669"/>
    <property type="project" value="UniProtKB-EC"/>
</dbReference>
<dbReference type="GO" id="GO:0009234">
    <property type="term" value="P:menaquinone biosynthetic process"/>
    <property type="evidence" value="ECO:0007669"/>
    <property type="project" value="UniProtKB-UniRule"/>
</dbReference>
<dbReference type="CDD" id="cd03320">
    <property type="entry name" value="OSBS"/>
    <property type="match status" value="1"/>
</dbReference>
<dbReference type="FunFam" id="3.20.20.120:FF:000006">
    <property type="entry name" value="o-succinylbenzoate synthase"/>
    <property type="match status" value="1"/>
</dbReference>
<dbReference type="Gene3D" id="3.20.20.120">
    <property type="entry name" value="Enolase-like C-terminal domain"/>
    <property type="match status" value="1"/>
</dbReference>
<dbReference type="Gene3D" id="3.30.390.10">
    <property type="entry name" value="Enolase-like, N-terminal domain"/>
    <property type="match status" value="1"/>
</dbReference>
<dbReference type="HAMAP" id="MF_00470">
    <property type="entry name" value="MenC_1"/>
    <property type="match status" value="1"/>
</dbReference>
<dbReference type="InterPro" id="IPR036849">
    <property type="entry name" value="Enolase-like_C_sf"/>
</dbReference>
<dbReference type="InterPro" id="IPR029017">
    <property type="entry name" value="Enolase-like_N"/>
</dbReference>
<dbReference type="InterPro" id="IPR029065">
    <property type="entry name" value="Enolase_C-like"/>
</dbReference>
<dbReference type="InterPro" id="IPR013342">
    <property type="entry name" value="Mandelate_racemase_C"/>
</dbReference>
<dbReference type="InterPro" id="IPR010196">
    <property type="entry name" value="OSB_synthase_MenC1"/>
</dbReference>
<dbReference type="InterPro" id="IPR041338">
    <property type="entry name" value="OSBS_N"/>
</dbReference>
<dbReference type="NCBIfam" id="TIGR01927">
    <property type="entry name" value="menC_gam_Gplu"/>
    <property type="match status" value="1"/>
</dbReference>
<dbReference type="NCBIfam" id="NF003473">
    <property type="entry name" value="PRK05105.1"/>
    <property type="match status" value="1"/>
</dbReference>
<dbReference type="PANTHER" id="PTHR48073:SF2">
    <property type="entry name" value="O-SUCCINYLBENZOATE SYNTHASE"/>
    <property type="match status" value="1"/>
</dbReference>
<dbReference type="PANTHER" id="PTHR48073">
    <property type="entry name" value="O-SUCCINYLBENZOATE SYNTHASE-RELATED"/>
    <property type="match status" value="1"/>
</dbReference>
<dbReference type="Pfam" id="PF21508">
    <property type="entry name" value="MenC_N"/>
    <property type="match status" value="1"/>
</dbReference>
<dbReference type="Pfam" id="PF13378">
    <property type="entry name" value="MR_MLE_C"/>
    <property type="match status" value="1"/>
</dbReference>
<dbReference type="SFLD" id="SFLDS00001">
    <property type="entry name" value="Enolase"/>
    <property type="match status" value="1"/>
</dbReference>
<dbReference type="SFLD" id="SFLDF00009">
    <property type="entry name" value="o-succinylbenzoate_synthase"/>
    <property type="match status" value="1"/>
</dbReference>
<dbReference type="SMART" id="SM00922">
    <property type="entry name" value="MR_MLE"/>
    <property type="match status" value="1"/>
</dbReference>
<dbReference type="SUPFAM" id="SSF51604">
    <property type="entry name" value="Enolase C-terminal domain-like"/>
    <property type="match status" value="1"/>
</dbReference>
<dbReference type="SUPFAM" id="SSF54826">
    <property type="entry name" value="Enolase N-terminal domain-like"/>
    <property type="match status" value="1"/>
</dbReference>
<feature type="chain" id="PRO_1000125582" description="o-succinylbenzoate synthase">
    <location>
        <begin position="1"/>
        <end position="320"/>
    </location>
</feature>
<feature type="active site" description="Proton donor" evidence="1">
    <location>
        <position position="133"/>
    </location>
</feature>
<feature type="active site" description="Proton acceptor" evidence="1">
    <location>
        <position position="235"/>
    </location>
</feature>
<feature type="binding site" evidence="1">
    <location>
        <position position="161"/>
    </location>
    <ligand>
        <name>Mg(2+)</name>
        <dbReference type="ChEBI" id="CHEBI:18420"/>
    </ligand>
</feature>
<feature type="binding site" evidence="1">
    <location>
        <position position="190"/>
    </location>
    <ligand>
        <name>Mg(2+)</name>
        <dbReference type="ChEBI" id="CHEBI:18420"/>
    </ligand>
</feature>
<feature type="binding site" evidence="1">
    <location>
        <position position="213"/>
    </location>
    <ligand>
        <name>Mg(2+)</name>
        <dbReference type="ChEBI" id="CHEBI:18420"/>
    </ligand>
</feature>